<proteinExistence type="evidence at transcript level"/>
<feature type="initiator methionine" description="Removed" evidence="2">
    <location>
        <position position="1"/>
    </location>
</feature>
<feature type="chain" id="PRO_0000437568" description="Calcium-dependent protein kinase 26">
    <location>
        <begin position="2"/>
        <end position="541"/>
    </location>
</feature>
<feature type="domain" description="Protein kinase" evidence="3">
    <location>
        <begin position="83"/>
        <end position="341"/>
    </location>
</feature>
<feature type="domain" description="EF-hand 1" evidence="4">
    <location>
        <begin position="384"/>
        <end position="419"/>
    </location>
</feature>
<feature type="domain" description="EF-hand 2" evidence="4">
    <location>
        <begin position="420"/>
        <end position="455"/>
    </location>
</feature>
<feature type="domain" description="EF-hand 3" evidence="4">
    <location>
        <begin position="456"/>
        <end position="491"/>
    </location>
</feature>
<feature type="domain" description="EF-hand 4" evidence="4">
    <location>
        <begin position="493"/>
        <end position="526"/>
    </location>
</feature>
<feature type="region of interest" description="Disordered" evidence="5">
    <location>
        <begin position="1"/>
        <end position="74"/>
    </location>
</feature>
<feature type="region of interest" description="Autoinhibitory domain" evidence="1">
    <location>
        <begin position="347"/>
        <end position="377"/>
    </location>
</feature>
<feature type="compositionally biased region" description="Gly residues" evidence="5">
    <location>
        <begin position="1"/>
        <end position="11"/>
    </location>
</feature>
<feature type="compositionally biased region" description="Low complexity" evidence="5">
    <location>
        <begin position="38"/>
        <end position="67"/>
    </location>
</feature>
<feature type="active site" description="Proton acceptor" evidence="3">
    <location>
        <position position="207"/>
    </location>
</feature>
<feature type="binding site" evidence="3">
    <location>
        <begin position="89"/>
        <end position="97"/>
    </location>
    <ligand>
        <name>ATP</name>
        <dbReference type="ChEBI" id="CHEBI:30616"/>
    </ligand>
</feature>
<feature type="binding site" evidence="3">
    <location>
        <position position="112"/>
    </location>
    <ligand>
        <name>ATP</name>
        <dbReference type="ChEBI" id="CHEBI:30616"/>
    </ligand>
</feature>
<feature type="binding site" evidence="4">
    <location>
        <position position="397"/>
    </location>
    <ligand>
        <name>Ca(2+)</name>
        <dbReference type="ChEBI" id="CHEBI:29108"/>
        <label>1</label>
    </ligand>
</feature>
<feature type="binding site" evidence="4">
    <location>
        <position position="399"/>
    </location>
    <ligand>
        <name>Ca(2+)</name>
        <dbReference type="ChEBI" id="CHEBI:29108"/>
        <label>1</label>
    </ligand>
</feature>
<feature type="binding site" evidence="4">
    <location>
        <position position="401"/>
    </location>
    <ligand>
        <name>Ca(2+)</name>
        <dbReference type="ChEBI" id="CHEBI:29108"/>
        <label>1</label>
    </ligand>
</feature>
<feature type="binding site" evidence="4">
    <location>
        <position position="403"/>
    </location>
    <ligand>
        <name>Ca(2+)</name>
        <dbReference type="ChEBI" id="CHEBI:29108"/>
        <label>1</label>
    </ligand>
</feature>
<feature type="binding site" evidence="4">
    <location>
        <position position="408"/>
    </location>
    <ligand>
        <name>Ca(2+)</name>
        <dbReference type="ChEBI" id="CHEBI:29108"/>
        <label>1</label>
    </ligand>
</feature>
<feature type="binding site" evidence="4">
    <location>
        <position position="433"/>
    </location>
    <ligand>
        <name>Ca(2+)</name>
        <dbReference type="ChEBI" id="CHEBI:29108"/>
        <label>2</label>
    </ligand>
</feature>
<feature type="binding site" evidence="4">
    <location>
        <position position="435"/>
    </location>
    <ligand>
        <name>Ca(2+)</name>
        <dbReference type="ChEBI" id="CHEBI:29108"/>
        <label>2</label>
    </ligand>
</feature>
<feature type="binding site" evidence="4">
    <location>
        <position position="437"/>
    </location>
    <ligand>
        <name>Ca(2+)</name>
        <dbReference type="ChEBI" id="CHEBI:29108"/>
        <label>2</label>
    </ligand>
</feature>
<feature type="binding site" evidence="4">
    <location>
        <position position="444"/>
    </location>
    <ligand>
        <name>Ca(2+)</name>
        <dbReference type="ChEBI" id="CHEBI:29108"/>
        <label>2</label>
    </ligand>
</feature>
<feature type="binding site" evidence="4">
    <location>
        <position position="469"/>
    </location>
    <ligand>
        <name>Ca(2+)</name>
        <dbReference type="ChEBI" id="CHEBI:29108"/>
        <label>3</label>
    </ligand>
</feature>
<feature type="binding site" evidence="4">
    <location>
        <position position="471"/>
    </location>
    <ligand>
        <name>Ca(2+)</name>
        <dbReference type="ChEBI" id="CHEBI:29108"/>
        <label>3</label>
    </ligand>
</feature>
<feature type="binding site" evidence="4">
    <location>
        <position position="473"/>
    </location>
    <ligand>
        <name>Ca(2+)</name>
        <dbReference type="ChEBI" id="CHEBI:29108"/>
        <label>3</label>
    </ligand>
</feature>
<feature type="binding site" evidence="4">
    <location>
        <position position="475"/>
    </location>
    <ligand>
        <name>Ca(2+)</name>
        <dbReference type="ChEBI" id="CHEBI:29108"/>
        <label>3</label>
    </ligand>
</feature>
<feature type="binding site" evidence="4">
    <location>
        <position position="480"/>
    </location>
    <ligand>
        <name>Ca(2+)</name>
        <dbReference type="ChEBI" id="CHEBI:29108"/>
        <label>3</label>
    </ligand>
</feature>
<feature type="binding site" evidence="4">
    <location>
        <position position="504"/>
    </location>
    <ligand>
        <name>Ca(2+)</name>
        <dbReference type="ChEBI" id="CHEBI:29108"/>
        <label>4</label>
    </ligand>
</feature>
<feature type="binding site" evidence="4">
    <location>
        <position position="506"/>
    </location>
    <ligand>
        <name>Ca(2+)</name>
        <dbReference type="ChEBI" id="CHEBI:29108"/>
        <label>4</label>
    </ligand>
</feature>
<feature type="binding site" evidence="4">
    <location>
        <position position="508"/>
    </location>
    <ligand>
        <name>Ca(2+)</name>
        <dbReference type="ChEBI" id="CHEBI:29108"/>
        <label>4</label>
    </ligand>
</feature>
<feature type="binding site" evidence="4">
    <location>
        <position position="510"/>
    </location>
    <ligand>
        <name>Ca(2+)</name>
        <dbReference type="ChEBI" id="CHEBI:29108"/>
        <label>4</label>
    </ligand>
</feature>
<feature type="binding site" evidence="4">
    <location>
        <position position="515"/>
    </location>
    <ligand>
        <name>Ca(2+)</name>
        <dbReference type="ChEBI" id="CHEBI:29108"/>
        <label>4</label>
    </ligand>
</feature>
<feature type="lipid moiety-binding region" description="N-myristoyl glycine" evidence="2">
    <location>
        <position position="2"/>
    </location>
</feature>
<reference key="1">
    <citation type="journal article" date="2005" name="BMC Biol.">
        <title>The sequence of rice chromosomes 11 and 12, rich in disease resistance genes and recent gene duplications.</title>
        <authorList>
            <consortium name="The rice chromosomes 11 and 12 sequencing consortia"/>
        </authorList>
    </citation>
    <scope>NUCLEOTIDE SEQUENCE [LARGE SCALE GENOMIC DNA]</scope>
    <source>
        <strain>cv. Nipponbare</strain>
    </source>
</reference>
<reference key="2">
    <citation type="journal article" date="2005" name="Nature">
        <title>The map-based sequence of the rice genome.</title>
        <authorList>
            <consortium name="International rice genome sequencing project (IRGSP)"/>
        </authorList>
    </citation>
    <scope>NUCLEOTIDE SEQUENCE [LARGE SCALE GENOMIC DNA]</scope>
    <source>
        <strain>cv. Nipponbare</strain>
    </source>
</reference>
<reference key="3">
    <citation type="journal article" date="2008" name="Nucleic Acids Res.">
        <title>The rice annotation project database (RAP-DB): 2008 update.</title>
        <authorList>
            <consortium name="The rice annotation project (RAP)"/>
        </authorList>
    </citation>
    <scope>GENOME REANNOTATION</scope>
    <source>
        <strain>cv. Nipponbare</strain>
    </source>
</reference>
<reference key="4">
    <citation type="journal article" date="2013" name="Rice">
        <title>Improvement of the Oryza sativa Nipponbare reference genome using next generation sequence and optical map data.</title>
        <authorList>
            <person name="Kawahara Y."/>
            <person name="de la Bastide M."/>
            <person name="Hamilton J.P."/>
            <person name="Kanamori H."/>
            <person name="McCombie W.R."/>
            <person name="Ouyang S."/>
            <person name="Schwartz D.C."/>
            <person name="Tanaka T."/>
            <person name="Wu J."/>
            <person name="Zhou S."/>
            <person name="Childs K.L."/>
            <person name="Davidson R.M."/>
            <person name="Lin H."/>
            <person name="Quesada-Ocampo L."/>
            <person name="Vaillancourt B."/>
            <person name="Sakai H."/>
            <person name="Lee S.S."/>
            <person name="Kim J."/>
            <person name="Numa H."/>
            <person name="Itoh T."/>
            <person name="Buell C.R."/>
            <person name="Matsumoto T."/>
        </authorList>
    </citation>
    <scope>GENOME REANNOTATION</scope>
    <source>
        <strain>cv. Nipponbare</strain>
    </source>
</reference>
<reference key="5">
    <citation type="journal article" date="2005" name="PLoS Biol.">
        <title>The genomes of Oryza sativa: a history of duplications.</title>
        <authorList>
            <person name="Yu J."/>
            <person name="Wang J."/>
            <person name="Lin W."/>
            <person name="Li S."/>
            <person name="Li H."/>
            <person name="Zhou J."/>
            <person name="Ni P."/>
            <person name="Dong W."/>
            <person name="Hu S."/>
            <person name="Zeng C."/>
            <person name="Zhang J."/>
            <person name="Zhang Y."/>
            <person name="Li R."/>
            <person name="Xu Z."/>
            <person name="Li S."/>
            <person name="Li X."/>
            <person name="Zheng H."/>
            <person name="Cong L."/>
            <person name="Lin L."/>
            <person name="Yin J."/>
            <person name="Geng J."/>
            <person name="Li G."/>
            <person name="Shi J."/>
            <person name="Liu J."/>
            <person name="Lv H."/>
            <person name="Li J."/>
            <person name="Wang J."/>
            <person name="Deng Y."/>
            <person name="Ran L."/>
            <person name="Shi X."/>
            <person name="Wang X."/>
            <person name="Wu Q."/>
            <person name="Li C."/>
            <person name="Ren X."/>
            <person name="Wang J."/>
            <person name="Wang X."/>
            <person name="Li D."/>
            <person name="Liu D."/>
            <person name="Zhang X."/>
            <person name="Ji Z."/>
            <person name="Zhao W."/>
            <person name="Sun Y."/>
            <person name="Zhang Z."/>
            <person name="Bao J."/>
            <person name="Han Y."/>
            <person name="Dong L."/>
            <person name="Ji J."/>
            <person name="Chen P."/>
            <person name="Wu S."/>
            <person name="Liu J."/>
            <person name="Xiao Y."/>
            <person name="Bu D."/>
            <person name="Tan J."/>
            <person name="Yang L."/>
            <person name="Ye C."/>
            <person name="Zhang J."/>
            <person name="Xu J."/>
            <person name="Zhou Y."/>
            <person name="Yu Y."/>
            <person name="Zhang B."/>
            <person name="Zhuang S."/>
            <person name="Wei H."/>
            <person name="Liu B."/>
            <person name="Lei M."/>
            <person name="Yu H."/>
            <person name="Li Y."/>
            <person name="Xu H."/>
            <person name="Wei S."/>
            <person name="He X."/>
            <person name="Fang L."/>
            <person name="Zhang Z."/>
            <person name="Zhang Y."/>
            <person name="Huang X."/>
            <person name="Su Z."/>
            <person name="Tong W."/>
            <person name="Li J."/>
            <person name="Tong Z."/>
            <person name="Li S."/>
            <person name="Ye J."/>
            <person name="Wang L."/>
            <person name="Fang L."/>
            <person name="Lei T."/>
            <person name="Chen C.-S."/>
            <person name="Chen H.-C."/>
            <person name="Xu Z."/>
            <person name="Li H."/>
            <person name="Huang H."/>
            <person name="Zhang F."/>
            <person name="Xu H."/>
            <person name="Li N."/>
            <person name="Zhao C."/>
            <person name="Li S."/>
            <person name="Dong L."/>
            <person name="Huang Y."/>
            <person name="Li L."/>
            <person name="Xi Y."/>
            <person name="Qi Q."/>
            <person name="Li W."/>
            <person name="Zhang B."/>
            <person name="Hu W."/>
            <person name="Zhang Y."/>
            <person name="Tian X."/>
            <person name="Jiao Y."/>
            <person name="Liang X."/>
            <person name="Jin J."/>
            <person name="Gao L."/>
            <person name="Zheng W."/>
            <person name="Hao B."/>
            <person name="Liu S.-M."/>
            <person name="Wang W."/>
            <person name="Yuan L."/>
            <person name="Cao M."/>
            <person name="McDermott J."/>
            <person name="Samudrala R."/>
            <person name="Wang J."/>
            <person name="Wong G.K.-S."/>
            <person name="Yang H."/>
        </authorList>
    </citation>
    <scope>NUCLEOTIDE SEQUENCE [LARGE SCALE GENOMIC DNA]</scope>
    <source>
        <strain>cv. Nipponbare</strain>
    </source>
</reference>
<reference key="6">
    <citation type="journal article" date="2005" name="Plant Cell Physiol.">
        <title>Genome-wide identification of the rice calcium-dependent protein kinase and its closely related kinase gene families: comprehensive analysis of the CDPKs gene family in rice.</title>
        <authorList>
            <person name="Asano T."/>
            <person name="Tanaka N."/>
            <person name="Yang G."/>
            <person name="Hayashi N."/>
            <person name="Komatsu S."/>
        </authorList>
    </citation>
    <scope>GENE FAMILY</scope>
    <scope>NOMENCLATURE</scope>
</reference>
<reference key="7">
    <citation type="journal article" date="2011" name="Plant Cell Physiol.">
        <title>OIP30, a RuvB-like DNA helicase 2, is a potential substrate for the pollen-predominant OsCPK25/26 in rice.</title>
        <authorList>
            <person name="Wang C.W."/>
            <person name="Chen W.C."/>
            <person name="Lin L.J."/>
            <person name="Lee C.T."/>
            <person name="Tseng T.H."/>
            <person name="Leu W.M."/>
        </authorList>
    </citation>
    <scope>TISSUE SPECIFICITY</scope>
</reference>
<organism>
    <name type="scientific">Oryza sativa subsp. japonica</name>
    <name type="common">Rice</name>
    <dbReference type="NCBI Taxonomy" id="39947"/>
    <lineage>
        <taxon>Eukaryota</taxon>
        <taxon>Viridiplantae</taxon>
        <taxon>Streptophyta</taxon>
        <taxon>Embryophyta</taxon>
        <taxon>Tracheophyta</taxon>
        <taxon>Spermatophyta</taxon>
        <taxon>Magnoliopsida</taxon>
        <taxon>Liliopsida</taxon>
        <taxon>Poales</taxon>
        <taxon>Poaceae</taxon>
        <taxon>BOP clade</taxon>
        <taxon>Oryzoideae</taxon>
        <taxon>Oryzeae</taxon>
        <taxon>Oryzinae</taxon>
        <taxon>Oryza</taxon>
        <taxon>Oryza sativa</taxon>
    </lineage>
</organism>
<evidence type="ECO:0000250" key="1">
    <source>
        <dbReference type="UniProtKB" id="Q06850"/>
    </source>
</evidence>
<evidence type="ECO:0000255" key="2"/>
<evidence type="ECO:0000255" key="3">
    <source>
        <dbReference type="PROSITE-ProRule" id="PRU00159"/>
    </source>
</evidence>
<evidence type="ECO:0000255" key="4">
    <source>
        <dbReference type="PROSITE-ProRule" id="PRU00448"/>
    </source>
</evidence>
<evidence type="ECO:0000256" key="5">
    <source>
        <dbReference type="SAM" id="MobiDB-lite"/>
    </source>
</evidence>
<evidence type="ECO:0000269" key="6">
    <source>
    </source>
</evidence>
<evidence type="ECO:0000303" key="7">
    <source>
    </source>
</evidence>
<evidence type="ECO:0000305" key="8"/>
<evidence type="ECO:0000312" key="9">
    <source>
        <dbReference type="EMBL" id="ABA95733.1"/>
    </source>
</evidence>
<evidence type="ECO:0000312" key="10">
    <source>
        <dbReference type="EMBL" id="BAT15771.1"/>
    </source>
</evidence>
<evidence type="ECO:0000312" key="11">
    <source>
        <dbReference type="EMBL" id="EAZ17361.1"/>
    </source>
</evidence>
<name>CDPKQ_ORYSJ</name>
<accession>Q2QY37</accession>
<accession>C7JA08</accession>
<comment type="function">
    <text evidence="1">May play a role in signal transduction pathways that involve calcium as a second messenger.</text>
</comment>
<comment type="catalytic activity">
    <reaction evidence="8">
        <text>L-seryl-[protein] + ATP = O-phospho-L-seryl-[protein] + ADP + H(+)</text>
        <dbReference type="Rhea" id="RHEA:17989"/>
        <dbReference type="Rhea" id="RHEA-COMP:9863"/>
        <dbReference type="Rhea" id="RHEA-COMP:11604"/>
        <dbReference type="ChEBI" id="CHEBI:15378"/>
        <dbReference type="ChEBI" id="CHEBI:29999"/>
        <dbReference type="ChEBI" id="CHEBI:30616"/>
        <dbReference type="ChEBI" id="CHEBI:83421"/>
        <dbReference type="ChEBI" id="CHEBI:456216"/>
        <dbReference type="EC" id="2.7.11.1"/>
    </reaction>
</comment>
<comment type="catalytic activity">
    <reaction evidence="8">
        <text>L-threonyl-[protein] + ATP = O-phospho-L-threonyl-[protein] + ADP + H(+)</text>
        <dbReference type="Rhea" id="RHEA:46608"/>
        <dbReference type="Rhea" id="RHEA-COMP:11060"/>
        <dbReference type="Rhea" id="RHEA-COMP:11605"/>
        <dbReference type="ChEBI" id="CHEBI:15378"/>
        <dbReference type="ChEBI" id="CHEBI:30013"/>
        <dbReference type="ChEBI" id="CHEBI:30616"/>
        <dbReference type="ChEBI" id="CHEBI:61977"/>
        <dbReference type="ChEBI" id="CHEBI:456216"/>
        <dbReference type="EC" id="2.7.11.1"/>
    </reaction>
</comment>
<comment type="activity regulation">
    <text evidence="1">Activated by calcium. Autophosphorylation may play an important role in the regulation of the kinase activity.</text>
</comment>
<comment type="subcellular location">
    <subcellularLocation>
        <location evidence="8">Membrane</location>
        <topology evidence="8">Lipid-anchor</topology>
    </subcellularLocation>
</comment>
<comment type="tissue specificity">
    <text evidence="6">Specifically expressed in heading panicles, spikelets and mature pollen grains. Not expressed in vegetative tissues.</text>
</comment>
<comment type="domain">
    <text evidence="1">There are 3 contiguous domains conserved in the CDPK subfamily: a kinase domain, an autoinhibitory (junction) domain and a calmodulin-like domain. The autoinhibitory domain (347-377) inactivates kinase activity under calcium-free conditions.</text>
</comment>
<comment type="similarity">
    <text evidence="8">Belongs to the protein kinase superfamily. Ser/Thr protein kinase family. CDPK subfamily.</text>
</comment>
<comment type="sequence caution" evidence="8">
    <conflict type="erroneous gene model prediction">
        <sequence resource="EMBL-CDS" id="BAH95505"/>
    </conflict>
</comment>
<dbReference type="EC" id="2.7.11.1" evidence="8"/>
<dbReference type="EMBL" id="DP000011">
    <property type="protein sequence ID" value="ABA95733.1"/>
    <property type="molecule type" value="Genomic_DNA"/>
</dbReference>
<dbReference type="EMBL" id="AP008218">
    <property type="protein sequence ID" value="BAH95505.1"/>
    <property type="status" value="ALT_SEQ"/>
    <property type="molecule type" value="Genomic_DNA"/>
</dbReference>
<dbReference type="EMBL" id="AP014968">
    <property type="protein sequence ID" value="BAT15771.1"/>
    <property type="molecule type" value="Genomic_DNA"/>
</dbReference>
<dbReference type="EMBL" id="CM000148">
    <property type="protein sequence ID" value="EAZ17361.1"/>
    <property type="molecule type" value="Genomic_DNA"/>
</dbReference>
<dbReference type="SMR" id="Q2QY37"/>
<dbReference type="FunCoup" id="Q2QY37">
    <property type="interactions" value="1726"/>
</dbReference>
<dbReference type="STRING" id="39947.Q2QY37"/>
<dbReference type="PaxDb" id="39947-Q2QY37"/>
<dbReference type="EnsemblPlants" id="Os12t0133500-00">
    <property type="protein sequence ID" value="Os12t0133500-00"/>
    <property type="gene ID" value="Os12g0133500"/>
</dbReference>
<dbReference type="GeneID" id="9266580"/>
<dbReference type="Gramene" id="Os12t0133500-00">
    <property type="protein sequence ID" value="Os12t0133500-00"/>
    <property type="gene ID" value="Os12g0133500"/>
</dbReference>
<dbReference type="KEGG" id="dosa:Os12g0133500"/>
<dbReference type="KEGG" id="osa:9266580"/>
<dbReference type="eggNOG" id="KOG0032">
    <property type="taxonomic scope" value="Eukaryota"/>
</dbReference>
<dbReference type="HOGENOM" id="CLU_000288_37_4_1"/>
<dbReference type="InParanoid" id="Q2QY37"/>
<dbReference type="OMA" id="AVIYIHE"/>
<dbReference type="OrthoDB" id="40902at2759"/>
<dbReference type="Proteomes" id="UP000000763">
    <property type="component" value="Chromosome 12"/>
</dbReference>
<dbReference type="Proteomes" id="UP000007752">
    <property type="component" value="Chromosome 11"/>
</dbReference>
<dbReference type="Proteomes" id="UP000059680">
    <property type="component" value="Chromosome 12"/>
</dbReference>
<dbReference type="GO" id="GO:0005737">
    <property type="term" value="C:cytoplasm"/>
    <property type="evidence" value="ECO:0000318"/>
    <property type="project" value="GO_Central"/>
</dbReference>
<dbReference type="GO" id="GO:0016020">
    <property type="term" value="C:membrane"/>
    <property type="evidence" value="ECO:0007669"/>
    <property type="project" value="UniProtKB-SubCell"/>
</dbReference>
<dbReference type="GO" id="GO:0005634">
    <property type="term" value="C:nucleus"/>
    <property type="evidence" value="ECO:0000318"/>
    <property type="project" value="GO_Central"/>
</dbReference>
<dbReference type="GO" id="GO:0005524">
    <property type="term" value="F:ATP binding"/>
    <property type="evidence" value="ECO:0007669"/>
    <property type="project" value="UniProtKB-KW"/>
</dbReference>
<dbReference type="GO" id="GO:0005509">
    <property type="term" value="F:calcium ion binding"/>
    <property type="evidence" value="ECO:0007669"/>
    <property type="project" value="InterPro"/>
</dbReference>
<dbReference type="GO" id="GO:0009931">
    <property type="term" value="F:calcium-dependent protein serine/threonine kinase activity"/>
    <property type="evidence" value="ECO:0000318"/>
    <property type="project" value="GO_Central"/>
</dbReference>
<dbReference type="GO" id="GO:0004683">
    <property type="term" value="F:calcium/calmodulin-dependent protein kinase activity"/>
    <property type="evidence" value="ECO:0000318"/>
    <property type="project" value="GO_Central"/>
</dbReference>
<dbReference type="GO" id="GO:0005516">
    <property type="term" value="F:calmodulin binding"/>
    <property type="evidence" value="ECO:0000318"/>
    <property type="project" value="GO_Central"/>
</dbReference>
<dbReference type="GO" id="GO:0106310">
    <property type="term" value="F:protein serine kinase activity"/>
    <property type="evidence" value="ECO:0007669"/>
    <property type="project" value="RHEA"/>
</dbReference>
<dbReference type="GO" id="GO:0035556">
    <property type="term" value="P:intracellular signal transduction"/>
    <property type="evidence" value="ECO:0000318"/>
    <property type="project" value="GO_Central"/>
</dbReference>
<dbReference type="CDD" id="cd05117">
    <property type="entry name" value="STKc_CAMK"/>
    <property type="match status" value="1"/>
</dbReference>
<dbReference type="FunFam" id="1.10.238.10:FF:000015">
    <property type="entry name" value="Calcium-dependent protein kinase 1"/>
    <property type="match status" value="1"/>
</dbReference>
<dbReference type="FunFam" id="3.30.200.20:FF:000004">
    <property type="entry name" value="Calcium-dependent protein kinase 1"/>
    <property type="match status" value="1"/>
</dbReference>
<dbReference type="FunFam" id="1.10.510.10:FF:000056">
    <property type="entry name" value="calcium-dependent protein kinase 1"/>
    <property type="match status" value="1"/>
</dbReference>
<dbReference type="Gene3D" id="1.10.238.10">
    <property type="entry name" value="EF-hand"/>
    <property type="match status" value="1"/>
</dbReference>
<dbReference type="Gene3D" id="3.30.200.20">
    <property type="entry name" value="Phosphorylase Kinase, domain 1"/>
    <property type="match status" value="1"/>
</dbReference>
<dbReference type="Gene3D" id="1.10.510.10">
    <property type="entry name" value="Transferase(Phosphotransferase) domain 1"/>
    <property type="match status" value="1"/>
</dbReference>
<dbReference type="InterPro" id="IPR050205">
    <property type="entry name" value="CDPK_Ser/Thr_kinases"/>
</dbReference>
<dbReference type="InterPro" id="IPR011992">
    <property type="entry name" value="EF-hand-dom_pair"/>
</dbReference>
<dbReference type="InterPro" id="IPR018247">
    <property type="entry name" value="EF_Hand_1_Ca_BS"/>
</dbReference>
<dbReference type="InterPro" id="IPR002048">
    <property type="entry name" value="EF_hand_dom"/>
</dbReference>
<dbReference type="InterPro" id="IPR011009">
    <property type="entry name" value="Kinase-like_dom_sf"/>
</dbReference>
<dbReference type="InterPro" id="IPR000719">
    <property type="entry name" value="Prot_kinase_dom"/>
</dbReference>
<dbReference type="InterPro" id="IPR017441">
    <property type="entry name" value="Protein_kinase_ATP_BS"/>
</dbReference>
<dbReference type="InterPro" id="IPR008271">
    <property type="entry name" value="Ser/Thr_kinase_AS"/>
</dbReference>
<dbReference type="PANTHER" id="PTHR24349">
    <property type="entry name" value="SERINE/THREONINE-PROTEIN KINASE"/>
    <property type="match status" value="1"/>
</dbReference>
<dbReference type="Pfam" id="PF13499">
    <property type="entry name" value="EF-hand_7"/>
    <property type="match status" value="2"/>
</dbReference>
<dbReference type="Pfam" id="PF00069">
    <property type="entry name" value="Pkinase"/>
    <property type="match status" value="1"/>
</dbReference>
<dbReference type="SMART" id="SM00054">
    <property type="entry name" value="EFh"/>
    <property type="match status" value="4"/>
</dbReference>
<dbReference type="SMART" id="SM00220">
    <property type="entry name" value="S_TKc"/>
    <property type="match status" value="1"/>
</dbReference>
<dbReference type="SUPFAM" id="SSF47473">
    <property type="entry name" value="EF-hand"/>
    <property type="match status" value="1"/>
</dbReference>
<dbReference type="SUPFAM" id="SSF56112">
    <property type="entry name" value="Protein kinase-like (PK-like)"/>
    <property type="match status" value="1"/>
</dbReference>
<dbReference type="PROSITE" id="PS00018">
    <property type="entry name" value="EF_HAND_1"/>
    <property type="match status" value="4"/>
</dbReference>
<dbReference type="PROSITE" id="PS50222">
    <property type="entry name" value="EF_HAND_2"/>
    <property type="match status" value="4"/>
</dbReference>
<dbReference type="PROSITE" id="PS00107">
    <property type="entry name" value="PROTEIN_KINASE_ATP"/>
    <property type="match status" value="1"/>
</dbReference>
<dbReference type="PROSITE" id="PS50011">
    <property type="entry name" value="PROTEIN_KINASE_DOM"/>
    <property type="match status" value="1"/>
</dbReference>
<dbReference type="PROSITE" id="PS00108">
    <property type="entry name" value="PROTEIN_KINASE_ST"/>
    <property type="match status" value="1"/>
</dbReference>
<gene>
    <name evidence="7" type="primary">CPK26</name>
    <name evidence="10" type="ordered locus">Os12g0133500</name>
    <name evidence="9" type="ordered locus">LOC_Os12g03970</name>
    <name evidence="11" type="ORF">OsJ_32884</name>
</gene>
<keyword id="KW-0067">ATP-binding</keyword>
<keyword id="KW-0106">Calcium</keyword>
<keyword id="KW-0418">Kinase</keyword>
<keyword id="KW-0449">Lipoprotein</keyword>
<keyword id="KW-0472">Membrane</keyword>
<keyword id="KW-0479">Metal-binding</keyword>
<keyword id="KW-0519">Myristate</keyword>
<keyword id="KW-0547">Nucleotide-binding</keyword>
<keyword id="KW-1185">Reference proteome</keyword>
<keyword id="KW-0677">Repeat</keyword>
<keyword id="KW-0723">Serine/threonine-protein kinase</keyword>
<keyword id="KW-0808">Transferase</keyword>
<protein>
    <recommendedName>
        <fullName evidence="8">Calcium-dependent protein kinase 26</fullName>
        <shortName evidence="8">OsCDPK26</shortName>
        <shortName evidence="7">OsCPK26</shortName>
        <ecNumber evidence="8">2.7.11.1</ecNumber>
    </recommendedName>
</protein>
<sequence>MGQCCTGGGKAVAGDEAEPGTSKAAPPSRGTSSKNGSAKQQPCSPAAKAAATEAAAAASSSKKPAGPIGEVLERPMEEVRTTYSIGKELGRGQFGVTHLCTHKATGEKLACKTIAKRKLANKEDVDDVRREVQIMHHLSGQPNIVDLRGAYEDKHNVHLVMELCAGGELFDRIIARGHYTERAAAALLRAIVGIVHTCHSMGVIHRDLKPENFLLLSKGDDAPLKATDFGLSVFFKEGEVFRDIVGSAYYIAPEVLKRKYGPEADIWSIGVMLYIFLAGVPPFWAESENAIFAAILRGQIDLASEPWPKISSGAKDLVRKMLNINPKERLTAFQVLNHPWIKEDGDAPDVPLDNVVLNRLKQFRAMNQFKKAALRIIAGCLSEEEIKGLKEMFKNIDKDNSGTITLEELKNGLAKQGTKFSDNEIEQLMEAADADGNGIIDYEEFVTATVHMNKMDREEHLYTAFQYFDKDNSGYITKEELEQALKEQGLYDANEIKDVITDADSNNDGRIDYSEFVAMMRKGSGCAEATNPKKKRRDLVL</sequence>